<accession>A7F045</accession>
<organism>
    <name type="scientific">Sclerotinia sclerotiorum (strain ATCC 18683 / 1980 / Ss-1)</name>
    <name type="common">White mold</name>
    <name type="synonym">Whetzelinia sclerotiorum</name>
    <dbReference type="NCBI Taxonomy" id="665079"/>
    <lineage>
        <taxon>Eukaryota</taxon>
        <taxon>Fungi</taxon>
        <taxon>Dikarya</taxon>
        <taxon>Ascomycota</taxon>
        <taxon>Pezizomycotina</taxon>
        <taxon>Leotiomycetes</taxon>
        <taxon>Helotiales</taxon>
        <taxon>Sclerotiniaceae</taxon>
        <taxon>Sclerotinia</taxon>
    </lineage>
</organism>
<evidence type="ECO:0000250" key="1">
    <source>
        <dbReference type="UniProtKB" id="P53867"/>
    </source>
</evidence>
<evidence type="ECO:0000250" key="2">
    <source>
        <dbReference type="UniProtKB" id="Q9Y4P1"/>
    </source>
</evidence>
<evidence type="ECO:0000256" key="3">
    <source>
        <dbReference type="SAM" id="MobiDB-lite"/>
    </source>
</evidence>
<evidence type="ECO:0000305" key="4"/>
<gene>
    <name type="primary">atg4</name>
    <name type="ORF">SS1G_10962</name>
</gene>
<protein>
    <recommendedName>
        <fullName>Probable cysteine protease atg4</fullName>
        <ecNumber>3.4.22.-</ecNumber>
    </recommendedName>
    <alternativeName>
        <fullName>Autophagy-related protein 4</fullName>
    </alternativeName>
</protein>
<dbReference type="EC" id="3.4.22.-"/>
<dbReference type="EMBL" id="CH476637">
    <property type="protein sequence ID" value="EDN95087.1"/>
    <property type="status" value="ALT_SEQ"/>
    <property type="molecule type" value="Genomic_DNA"/>
</dbReference>
<dbReference type="RefSeq" id="XP_001587722.1">
    <property type="nucleotide sequence ID" value="XM_001587672.1"/>
</dbReference>
<dbReference type="SMR" id="A7F045"/>
<dbReference type="FunCoup" id="A7F045">
    <property type="interactions" value="287"/>
</dbReference>
<dbReference type="STRING" id="665079.A7F045"/>
<dbReference type="MEROPS" id="C54.001"/>
<dbReference type="GeneID" id="5484186"/>
<dbReference type="KEGG" id="ssl:SS1G_10962"/>
<dbReference type="VEuPathDB" id="FungiDB:sscle_12g089570"/>
<dbReference type="eggNOG" id="KOG2674">
    <property type="taxonomic scope" value="Eukaryota"/>
</dbReference>
<dbReference type="InParanoid" id="A7F045"/>
<dbReference type="OrthoDB" id="2960936at2759"/>
<dbReference type="Proteomes" id="UP000001312">
    <property type="component" value="Unassembled WGS sequence"/>
</dbReference>
<dbReference type="GO" id="GO:0005737">
    <property type="term" value="C:cytoplasm"/>
    <property type="evidence" value="ECO:0000318"/>
    <property type="project" value="GO_Central"/>
</dbReference>
<dbReference type="GO" id="GO:0005634">
    <property type="term" value="C:nucleus"/>
    <property type="evidence" value="ECO:0007669"/>
    <property type="project" value="UniProtKB-SubCell"/>
</dbReference>
<dbReference type="GO" id="GO:0000407">
    <property type="term" value="C:phagophore assembly site"/>
    <property type="evidence" value="ECO:0007669"/>
    <property type="project" value="UniProtKB-SubCell"/>
</dbReference>
<dbReference type="GO" id="GO:0004197">
    <property type="term" value="F:cysteine-type endopeptidase activity"/>
    <property type="evidence" value="ECO:0000318"/>
    <property type="project" value="GO_Central"/>
</dbReference>
<dbReference type="GO" id="GO:0019786">
    <property type="term" value="F:protein-phosphatidylethanolamide deconjugating activity"/>
    <property type="evidence" value="ECO:0000318"/>
    <property type="project" value="GO_Central"/>
</dbReference>
<dbReference type="GO" id="GO:0035973">
    <property type="term" value="P:aggrephagy"/>
    <property type="evidence" value="ECO:0000318"/>
    <property type="project" value="GO_Central"/>
</dbReference>
<dbReference type="GO" id="GO:0000045">
    <property type="term" value="P:autophagosome assembly"/>
    <property type="evidence" value="ECO:0000318"/>
    <property type="project" value="GO_Central"/>
</dbReference>
<dbReference type="GO" id="GO:0000423">
    <property type="term" value="P:mitophagy"/>
    <property type="evidence" value="ECO:0000318"/>
    <property type="project" value="GO_Central"/>
</dbReference>
<dbReference type="GO" id="GO:0034727">
    <property type="term" value="P:piecemeal microautophagy of the nucleus"/>
    <property type="evidence" value="ECO:0000318"/>
    <property type="project" value="GO_Central"/>
</dbReference>
<dbReference type="GO" id="GO:0016485">
    <property type="term" value="P:protein processing"/>
    <property type="evidence" value="ECO:0000318"/>
    <property type="project" value="GO_Central"/>
</dbReference>
<dbReference type="GO" id="GO:0015031">
    <property type="term" value="P:protein transport"/>
    <property type="evidence" value="ECO:0007669"/>
    <property type="project" value="UniProtKB-KW"/>
</dbReference>
<dbReference type="InterPro" id="IPR038765">
    <property type="entry name" value="Papain-like_cys_pep_sf"/>
</dbReference>
<dbReference type="InterPro" id="IPR005078">
    <property type="entry name" value="Peptidase_C54"/>
</dbReference>
<dbReference type="InterPro" id="IPR046792">
    <property type="entry name" value="Peptidase_C54_cat"/>
</dbReference>
<dbReference type="PANTHER" id="PTHR22624:SF49">
    <property type="entry name" value="CYSTEINE PROTEASE"/>
    <property type="match status" value="1"/>
</dbReference>
<dbReference type="PANTHER" id="PTHR22624">
    <property type="entry name" value="CYSTEINE PROTEASE ATG4"/>
    <property type="match status" value="1"/>
</dbReference>
<dbReference type="Pfam" id="PF03416">
    <property type="entry name" value="Peptidase_C54"/>
    <property type="match status" value="1"/>
</dbReference>
<dbReference type="SUPFAM" id="SSF54001">
    <property type="entry name" value="Cysteine proteinases"/>
    <property type="match status" value="1"/>
</dbReference>
<feature type="chain" id="PRO_0000317845" description="Probable cysteine protease atg4">
    <location>
        <begin position="1"/>
        <end position="439"/>
    </location>
</feature>
<feature type="region of interest" description="Disordered" evidence="3">
    <location>
        <begin position="65"/>
        <end position="91"/>
    </location>
</feature>
<feature type="compositionally biased region" description="Low complexity" evidence="3">
    <location>
        <begin position="66"/>
        <end position="77"/>
    </location>
</feature>
<feature type="compositionally biased region" description="Polar residues" evidence="3">
    <location>
        <begin position="78"/>
        <end position="91"/>
    </location>
</feature>
<feature type="active site" description="Nucleophile" evidence="2">
    <location>
        <position position="158"/>
    </location>
</feature>
<feature type="active site" evidence="2">
    <location>
        <position position="332"/>
    </location>
</feature>
<feature type="active site" evidence="2">
    <location>
        <position position="334"/>
    </location>
</feature>
<reference key="1">
    <citation type="journal article" date="2011" name="PLoS Genet.">
        <title>Genomic analysis of the necrotrophic fungal pathogens Sclerotinia sclerotiorum and Botrytis cinerea.</title>
        <authorList>
            <person name="Amselem J."/>
            <person name="Cuomo C.A."/>
            <person name="van Kan J.A.L."/>
            <person name="Viaud M."/>
            <person name="Benito E.P."/>
            <person name="Couloux A."/>
            <person name="Coutinho P.M."/>
            <person name="de Vries R.P."/>
            <person name="Dyer P.S."/>
            <person name="Fillinger S."/>
            <person name="Fournier E."/>
            <person name="Gout L."/>
            <person name="Hahn M."/>
            <person name="Kohn L."/>
            <person name="Lapalu N."/>
            <person name="Plummer K.M."/>
            <person name="Pradier J.-M."/>
            <person name="Quevillon E."/>
            <person name="Sharon A."/>
            <person name="Simon A."/>
            <person name="ten Have A."/>
            <person name="Tudzynski B."/>
            <person name="Tudzynski P."/>
            <person name="Wincker P."/>
            <person name="Andrew M."/>
            <person name="Anthouard V."/>
            <person name="Beever R.E."/>
            <person name="Beffa R."/>
            <person name="Benoit I."/>
            <person name="Bouzid O."/>
            <person name="Brault B."/>
            <person name="Chen Z."/>
            <person name="Choquer M."/>
            <person name="Collemare J."/>
            <person name="Cotton P."/>
            <person name="Danchin E.G."/>
            <person name="Da Silva C."/>
            <person name="Gautier A."/>
            <person name="Giraud C."/>
            <person name="Giraud T."/>
            <person name="Gonzalez C."/>
            <person name="Grossetete S."/>
            <person name="Gueldener U."/>
            <person name="Henrissat B."/>
            <person name="Howlett B.J."/>
            <person name="Kodira C."/>
            <person name="Kretschmer M."/>
            <person name="Lappartient A."/>
            <person name="Leroch M."/>
            <person name="Levis C."/>
            <person name="Mauceli E."/>
            <person name="Neuveglise C."/>
            <person name="Oeser B."/>
            <person name="Pearson M."/>
            <person name="Poulain J."/>
            <person name="Poussereau N."/>
            <person name="Quesneville H."/>
            <person name="Rascle C."/>
            <person name="Schumacher J."/>
            <person name="Segurens B."/>
            <person name="Sexton A."/>
            <person name="Silva E."/>
            <person name="Sirven C."/>
            <person name="Soanes D.M."/>
            <person name="Talbot N.J."/>
            <person name="Templeton M."/>
            <person name="Yandava C."/>
            <person name="Yarden O."/>
            <person name="Zeng Q."/>
            <person name="Rollins J.A."/>
            <person name="Lebrun M.-H."/>
            <person name="Dickman M."/>
        </authorList>
    </citation>
    <scope>NUCLEOTIDE SEQUENCE [LARGE SCALE GENOMIC DNA]</scope>
    <source>
        <strain>ATCC 18683 / 1980 / Ss-1</strain>
    </source>
</reference>
<comment type="function">
    <text evidence="1">Cysteine protease that plays a key role in cytoplasm to vacuole transport (Cvt) and autophagy by mediating both proteolytic activation and delipidation of ATG8. Required for selective autophagic degradation of the nucleus (nucleophagy) as well as for mitophagy which contributes to regulate mitochondrial quantity and quality by eliminating the mitochondria to a basal level to fulfill cellular energy requirements and preventing excess ROS production. The protease activity is required for proteolytic activation of ATG8: cleaves the C-terminal amino acid of ATG8 to reveal a C-terminal glycine. ATG8 ubiquitin-like activity requires the exposure of the glycine at the C-terminus for its conjugation to phosphatidylethanolamine (PE) and its insertion to membranes, which is necessary for autophagy. The ATG8-PE conjugate mediates tethering between adjacent membranes and stimulates membrane hemifusion, leading to expansion of the autophagosomal membrane during autophagy. In addition to the protease activity, also catalyzes deconjugation of PE-conjugated forms of ATG8 during macroautophagy: ATG8 delipidation is required to release the protein from membranes, which facilitates multiple events during macroautophagy, and especially for efficient autophagosome biogenesis, the assembly of ATG9-containing tubulovesicular clusters into phagophores/autophagosomes, and for the disassembly of PAS-associated ATG components. ATG8 delipidation by ATG4 also recycles ATG8-PE generated on inappropriate membranes to maintain a reservoir of unlipidated ATG8 that is required for autophagosome formation at the PAS.</text>
</comment>
<comment type="catalytic activity">
    <reaction evidence="1">
        <text>[protein]-C-terminal L-amino acid-glycyl-phosphatidylethanolamide + H2O = [protein]-C-terminal L-amino acid-glycine + a 1,2-diacyl-sn-glycero-3-phosphoethanolamine</text>
        <dbReference type="Rhea" id="RHEA:67548"/>
        <dbReference type="Rhea" id="RHEA-COMP:17323"/>
        <dbReference type="Rhea" id="RHEA-COMP:17324"/>
        <dbReference type="ChEBI" id="CHEBI:15377"/>
        <dbReference type="ChEBI" id="CHEBI:64612"/>
        <dbReference type="ChEBI" id="CHEBI:172940"/>
        <dbReference type="ChEBI" id="CHEBI:172941"/>
    </reaction>
    <physiologicalReaction direction="left-to-right" evidence="1">
        <dbReference type="Rhea" id="RHEA:67549"/>
    </physiologicalReaction>
</comment>
<comment type="subcellular location">
    <subcellularLocation>
        <location evidence="1">Cytoplasm</location>
    </subcellularLocation>
    <subcellularLocation>
        <location evidence="1">Nucleus</location>
    </subcellularLocation>
    <subcellularLocation>
        <location evidence="1">Preautophagosomal structure</location>
    </subcellularLocation>
</comment>
<comment type="similarity">
    <text evidence="4">Belongs to the peptidase C54 family.</text>
</comment>
<comment type="sequence caution" evidence="4">
    <conflict type="erroneous gene model prediction">
        <sequence resource="EMBL-CDS" id="EDN95087"/>
    </conflict>
</comment>
<proteinExistence type="inferred from homology"/>
<sequence length="439" mass="48728">MTTVDIGRYKRLVQYFWDPEPTNNIASKSPIWCLGEEYLVSDKSSPSAVTESPPKEGGYLLAQSLSTTETTTPPDSTVGSLESSSEYDNCDTASTDGGWPTAFLDDFEAKIWLTYRSNFPAIAKSQDPKALSAMSLSVRLRSQLVDQGGFTSDTGWGCMIRSGQSLLANALLTLRMGREWRRGSSSNEERKILSLFADDPRAPYSIHKFVEHGASACGKHPGEWFGPSAAARCIQALTNSQVESELRVYITGDGSDVYEDTFMSIAKPNSTKFTPTLILVGTRLGLDKITPVYWEALKSSLQMPQSVGIAGGRPSSSHYFIGVQESDFFYLDPHQTRPALPFNDNVEDYTPEDIDSCHTRRLRRLHIKEMDPSMLIAFLIRDENDWKDWRRAVREVQGKGVIHVADRDPALHGLGAERDGAIDEVETFDDDDDDTVLNG</sequence>
<keyword id="KW-0072">Autophagy</keyword>
<keyword id="KW-0963">Cytoplasm</keyword>
<keyword id="KW-0378">Hydrolase</keyword>
<keyword id="KW-0539">Nucleus</keyword>
<keyword id="KW-0645">Protease</keyword>
<keyword id="KW-0653">Protein transport</keyword>
<keyword id="KW-1185">Reference proteome</keyword>
<keyword id="KW-0788">Thiol protease</keyword>
<keyword id="KW-0813">Transport</keyword>
<name>ATG4_SCLS1</name>